<organism>
    <name type="scientific">Actinobacillus pleuropneumoniae serotype 5b (strain L20)</name>
    <dbReference type="NCBI Taxonomy" id="416269"/>
    <lineage>
        <taxon>Bacteria</taxon>
        <taxon>Pseudomonadati</taxon>
        <taxon>Pseudomonadota</taxon>
        <taxon>Gammaproteobacteria</taxon>
        <taxon>Pasteurellales</taxon>
        <taxon>Pasteurellaceae</taxon>
        <taxon>Actinobacillus</taxon>
    </lineage>
</organism>
<name>SECB_ACTP2</name>
<accession>A3N2F7</accession>
<dbReference type="EMBL" id="CP000569">
    <property type="protein sequence ID" value="ABN74593.1"/>
    <property type="molecule type" value="Genomic_DNA"/>
</dbReference>
<dbReference type="RefSeq" id="WP_009875213.1">
    <property type="nucleotide sequence ID" value="NC_009053.1"/>
</dbReference>
<dbReference type="SMR" id="A3N2F7"/>
<dbReference type="STRING" id="416269.APL_1509"/>
<dbReference type="EnsemblBacteria" id="ABN74593">
    <property type="protein sequence ID" value="ABN74593"/>
    <property type="gene ID" value="APL_1509"/>
</dbReference>
<dbReference type="KEGG" id="apl:APL_1509"/>
<dbReference type="PATRIC" id="fig|416269.6.peg.1570"/>
<dbReference type="eggNOG" id="COG1952">
    <property type="taxonomic scope" value="Bacteria"/>
</dbReference>
<dbReference type="HOGENOM" id="CLU_111574_1_0_6"/>
<dbReference type="Proteomes" id="UP000001432">
    <property type="component" value="Chromosome"/>
</dbReference>
<dbReference type="GO" id="GO:0005737">
    <property type="term" value="C:cytoplasm"/>
    <property type="evidence" value="ECO:0007669"/>
    <property type="project" value="UniProtKB-SubCell"/>
</dbReference>
<dbReference type="GO" id="GO:0051082">
    <property type="term" value="F:unfolded protein binding"/>
    <property type="evidence" value="ECO:0007669"/>
    <property type="project" value="InterPro"/>
</dbReference>
<dbReference type="GO" id="GO:0006457">
    <property type="term" value="P:protein folding"/>
    <property type="evidence" value="ECO:0007669"/>
    <property type="project" value="UniProtKB-UniRule"/>
</dbReference>
<dbReference type="GO" id="GO:0051262">
    <property type="term" value="P:protein tetramerization"/>
    <property type="evidence" value="ECO:0007669"/>
    <property type="project" value="InterPro"/>
</dbReference>
<dbReference type="GO" id="GO:0015031">
    <property type="term" value="P:protein transport"/>
    <property type="evidence" value="ECO:0007669"/>
    <property type="project" value="UniProtKB-UniRule"/>
</dbReference>
<dbReference type="CDD" id="cd00557">
    <property type="entry name" value="Translocase_SecB"/>
    <property type="match status" value="1"/>
</dbReference>
<dbReference type="Gene3D" id="3.10.420.10">
    <property type="entry name" value="SecB-like"/>
    <property type="match status" value="1"/>
</dbReference>
<dbReference type="HAMAP" id="MF_00821">
    <property type="entry name" value="SecB"/>
    <property type="match status" value="1"/>
</dbReference>
<dbReference type="InterPro" id="IPR003708">
    <property type="entry name" value="SecB"/>
</dbReference>
<dbReference type="InterPro" id="IPR035958">
    <property type="entry name" value="SecB-like_sf"/>
</dbReference>
<dbReference type="NCBIfam" id="NF004393">
    <property type="entry name" value="PRK05751.1-4"/>
    <property type="match status" value="1"/>
</dbReference>
<dbReference type="NCBIfam" id="TIGR00809">
    <property type="entry name" value="secB"/>
    <property type="match status" value="1"/>
</dbReference>
<dbReference type="PANTHER" id="PTHR36918">
    <property type="match status" value="1"/>
</dbReference>
<dbReference type="PANTHER" id="PTHR36918:SF1">
    <property type="entry name" value="PROTEIN-EXPORT PROTEIN SECB"/>
    <property type="match status" value="1"/>
</dbReference>
<dbReference type="Pfam" id="PF02556">
    <property type="entry name" value="SecB"/>
    <property type="match status" value="1"/>
</dbReference>
<dbReference type="PRINTS" id="PR01594">
    <property type="entry name" value="SECBCHAPRONE"/>
</dbReference>
<dbReference type="SUPFAM" id="SSF54611">
    <property type="entry name" value="SecB-like"/>
    <property type="match status" value="1"/>
</dbReference>
<evidence type="ECO:0000255" key="1">
    <source>
        <dbReference type="HAMAP-Rule" id="MF_00821"/>
    </source>
</evidence>
<protein>
    <recommendedName>
        <fullName evidence="1">Protein-export protein SecB</fullName>
    </recommendedName>
</protein>
<reference key="1">
    <citation type="journal article" date="2008" name="J. Bacteriol.">
        <title>The complete genome sequence of Actinobacillus pleuropneumoniae L20 (serotype 5b).</title>
        <authorList>
            <person name="Foote S.J."/>
            <person name="Bosse J.T."/>
            <person name="Bouevitch A.B."/>
            <person name="Langford P.R."/>
            <person name="Young N.M."/>
            <person name="Nash J.H.E."/>
        </authorList>
    </citation>
    <scope>NUCLEOTIDE SEQUENCE [LARGE SCALE GENOMIC DNA]</scope>
    <source>
        <strain>L20</strain>
    </source>
</reference>
<gene>
    <name evidence="1" type="primary">secB</name>
    <name type="ordered locus">APL_1509</name>
</gene>
<keyword id="KW-0143">Chaperone</keyword>
<keyword id="KW-0963">Cytoplasm</keyword>
<keyword id="KW-0653">Protein transport</keyword>
<keyword id="KW-1185">Reference proteome</keyword>
<keyword id="KW-0811">Translocation</keyword>
<keyword id="KW-0813">Transport</keyword>
<feature type="chain" id="PRO_1000062447" description="Protein-export protein SecB">
    <location>
        <begin position="1"/>
        <end position="166"/>
    </location>
</feature>
<sequence length="166" mass="18647">MAEENQVAAPEEAQTPFELQIQRIYIKDVSFEAPNLPTIFHQEWKPQLGFELDTETKQLDEDLYEVVLHINVSTTLEDSGDTAFICEVKQAGVFTIKGIEGIQLAHCLASQCPNVLYPYARELISSLVNRGTFPALNLSPVNFDALFMDYLQRQEAEQNAEAPAVN</sequence>
<proteinExistence type="inferred from homology"/>
<comment type="function">
    <text evidence="1">One of the proteins required for the normal export of preproteins out of the cell cytoplasm. It is a molecular chaperone that binds to a subset of precursor proteins, maintaining them in a translocation-competent state. It also specifically binds to its receptor SecA.</text>
</comment>
<comment type="subunit">
    <text evidence="1">Homotetramer, a dimer of dimers. One homotetramer interacts with 1 SecA dimer.</text>
</comment>
<comment type="subcellular location">
    <subcellularLocation>
        <location evidence="1">Cytoplasm</location>
    </subcellularLocation>
</comment>
<comment type="similarity">
    <text evidence="1">Belongs to the SecB family.</text>
</comment>